<protein>
    <recommendedName>
        <fullName>Small integral membrane protein 14</fullName>
    </recommendedName>
</protein>
<dbReference type="EMBL" id="BC100271">
    <property type="protein sequence ID" value="AAI00272.1"/>
    <property type="molecule type" value="mRNA"/>
</dbReference>
<dbReference type="RefSeq" id="NP_001032881.1">
    <property type="nucleotide sequence ID" value="NM_001037792.1"/>
</dbReference>
<dbReference type="RefSeq" id="XP_006251023.1">
    <property type="nucleotide sequence ID" value="XM_006250961.5"/>
</dbReference>
<dbReference type="RefSeq" id="XP_038948175.1">
    <property type="nucleotide sequence ID" value="XM_039092247.2"/>
</dbReference>
<dbReference type="RefSeq" id="XP_038948176.1">
    <property type="nucleotide sequence ID" value="XM_039092248.2"/>
</dbReference>
<dbReference type="RefSeq" id="XP_038948177.1">
    <property type="nucleotide sequence ID" value="XM_039092249.2"/>
</dbReference>
<dbReference type="RefSeq" id="XP_038948178.1">
    <property type="nucleotide sequence ID" value="XM_039092250.2"/>
</dbReference>
<dbReference type="RefSeq" id="XP_063129504.1">
    <property type="nucleotide sequence ID" value="XM_063273434.1"/>
</dbReference>
<dbReference type="RefSeq" id="XP_063129506.1">
    <property type="nucleotide sequence ID" value="XM_063273436.1"/>
</dbReference>
<dbReference type="BioGRID" id="264622">
    <property type="interactions" value="1"/>
</dbReference>
<dbReference type="FunCoup" id="Q498C7">
    <property type="interactions" value="2512"/>
</dbReference>
<dbReference type="STRING" id="10116.ENSRNOP00000003552"/>
<dbReference type="iPTMnet" id="Q498C7"/>
<dbReference type="PhosphoSitePlus" id="Q498C7"/>
<dbReference type="PaxDb" id="10116-ENSRNOP00000003552"/>
<dbReference type="Ensembl" id="ENSRNOT00000099960.1">
    <property type="protein sequence ID" value="ENSRNOP00000085533.1"/>
    <property type="gene ID" value="ENSRNOG00000066377.1"/>
</dbReference>
<dbReference type="GeneID" id="364154"/>
<dbReference type="KEGG" id="rno:364154"/>
<dbReference type="UCSC" id="RGD:1311122">
    <property type="organism name" value="rat"/>
</dbReference>
<dbReference type="AGR" id="RGD:1311122"/>
<dbReference type="CTD" id="201895"/>
<dbReference type="RGD" id="1311122">
    <property type="gene designation" value="Smim14"/>
</dbReference>
<dbReference type="eggNOG" id="ENOG502S7T0">
    <property type="taxonomic scope" value="Eukaryota"/>
</dbReference>
<dbReference type="GeneTree" id="ENSGT00390000018294"/>
<dbReference type="HOGENOM" id="CLU_152284_0_0_1"/>
<dbReference type="InParanoid" id="Q498C7"/>
<dbReference type="OMA" id="ACTDTEC"/>
<dbReference type="OrthoDB" id="10054061at2759"/>
<dbReference type="PhylomeDB" id="Q498C7"/>
<dbReference type="TreeFam" id="TF314023"/>
<dbReference type="PRO" id="PR:Q498C7"/>
<dbReference type="Proteomes" id="UP000002494">
    <property type="component" value="Chromosome 14"/>
</dbReference>
<dbReference type="Bgee" id="ENSRNOG00000002553">
    <property type="expression patterns" value="Expressed in pancreas and 20 other cell types or tissues"/>
</dbReference>
<dbReference type="GO" id="GO:0005783">
    <property type="term" value="C:endoplasmic reticulum"/>
    <property type="evidence" value="ECO:0000250"/>
    <property type="project" value="UniProtKB"/>
</dbReference>
<dbReference type="GO" id="GO:0005789">
    <property type="term" value="C:endoplasmic reticulum membrane"/>
    <property type="evidence" value="ECO:0007669"/>
    <property type="project" value="UniProtKB-SubCell"/>
</dbReference>
<dbReference type="GO" id="GO:0001835">
    <property type="term" value="P:blastocyst hatching"/>
    <property type="evidence" value="ECO:0000266"/>
    <property type="project" value="RGD"/>
</dbReference>
<dbReference type="InterPro" id="IPR020309">
    <property type="entry name" value="Uncharacterised_CD034/YQF4"/>
</dbReference>
<dbReference type="PANTHER" id="PTHR31019">
    <property type="entry name" value="SMALL INTEGRAL MEMBRANE PROTEIN 14"/>
    <property type="match status" value="1"/>
</dbReference>
<dbReference type="PANTHER" id="PTHR31019:SF1">
    <property type="entry name" value="SMALL INTEGRAL MEMBRANE PROTEIN 14"/>
    <property type="match status" value="1"/>
</dbReference>
<dbReference type="Pfam" id="PF11027">
    <property type="entry name" value="DUF2615"/>
    <property type="match status" value="1"/>
</dbReference>
<reference key="1">
    <citation type="journal article" date="2004" name="Genome Res.">
        <title>The status, quality, and expansion of the NIH full-length cDNA project: the Mammalian Gene Collection (MGC).</title>
        <authorList>
            <consortium name="The MGC Project Team"/>
        </authorList>
    </citation>
    <scope>NUCLEOTIDE SEQUENCE [LARGE SCALE MRNA]</scope>
    <source>
        <tissue>Placenta</tissue>
    </source>
</reference>
<sequence>MAEGGFDPCECICSHEHAMRRLINLLRQSQSYCTDTECLRELPGPSGDSGISITVILMAWMVIAVLLFLLRPPNLRGSSLPGKPSSPHSGQDPPAPPVD</sequence>
<keyword id="KW-0256">Endoplasmic reticulum</keyword>
<keyword id="KW-0472">Membrane</keyword>
<keyword id="KW-1185">Reference proteome</keyword>
<keyword id="KW-0812">Transmembrane</keyword>
<keyword id="KW-1133">Transmembrane helix</keyword>
<evidence type="ECO:0000250" key="1"/>
<evidence type="ECO:0000255" key="2"/>
<evidence type="ECO:0000256" key="3">
    <source>
        <dbReference type="SAM" id="MobiDB-lite"/>
    </source>
</evidence>
<proteinExistence type="inferred from homology"/>
<comment type="subcellular location">
    <subcellularLocation>
        <location evidence="1">Endoplasmic reticulum membrane</location>
        <topology evidence="1">Single-pass membrane protein</topology>
    </subcellularLocation>
</comment>
<feature type="chain" id="PRO_0000268819" description="Small integral membrane protein 14">
    <location>
        <begin position="1"/>
        <end position="99"/>
    </location>
</feature>
<feature type="topological domain" description="Lumenal" evidence="2">
    <location>
        <begin position="1"/>
        <end position="49"/>
    </location>
</feature>
<feature type="transmembrane region" description="Helical" evidence="2">
    <location>
        <begin position="50"/>
        <end position="70"/>
    </location>
</feature>
<feature type="topological domain" description="Cytoplasmic" evidence="2">
    <location>
        <begin position="71"/>
        <end position="99"/>
    </location>
</feature>
<feature type="region of interest" description="Disordered" evidence="3">
    <location>
        <begin position="77"/>
        <end position="99"/>
    </location>
</feature>
<name>SIM14_RAT</name>
<organism>
    <name type="scientific">Rattus norvegicus</name>
    <name type="common">Rat</name>
    <dbReference type="NCBI Taxonomy" id="10116"/>
    <lineage>
        <taxon>Eukaryota</taxon>
        <taxon>Metazoa</taxon>
        <taxon>Chordata</taxon>
        <taxon>Craniata</taxon>
        <taxon>Vertebrata</taxon>
        <taxon>Euteleostomi</taxon>
        <taxon>Mammalia</taxon>
        <taxon>Eutheria</taxon>
        <taxon>Euarchontoglires</taxon>
        <taxon>Glires</taxon>
        <taxon>Rodentia</taxon>
        <taxon>Myomorpha</taxon>
        <taxon>Muroidea</taxon>
        <taxon>Muridae</taxon>
        <taxon>Murinae</taxon>
        <taxon>Rattus</taxon>
    </lineage>
</organism>
<gene>
    <name type="primary">Smim14</name>
</gene>
<accession>Q498C7</accession>